<gene>
    <name type="ordered locus">PF2058</name>
</gene>
<keyword id="KW-1185">Reference proteome</keyword>
<keyword id="KW-1277">Toxin-antitoxin system</keyword>
<reference key="1">
    <citation type="journal article" date="1999" name="Genetics">
        <title>Divergence of the hyperthermophilic archaea Pyrococcus furiosus and P. horikoshii inferred from complete genomic sequences.</title>
        <authorList>
            <person name="Maeder D.L."/>
            <person name="Weiss R.B."/>
            <person name="Dunn D.M."/>
            <person name="Cherry J.L."/>
            <person name="Gonzalez J.M."/>
            <person name="DiRuggiero J."/>
            <person name="Robb F.T."/>
        </authorList>
    </citation>
    <scope>NUCLEOTIDE SEQUENCE [LARGE SCALE GENOMIC DNA]</scope>
    <source>
        <strain>ATCC 43587 / DSM 3638 / JCM 8422 / Vc1</strain>
    </source>
</reference>
<name>Y2058_PYRFU</name>
<sequence>MQVIEAIYEDGVLKPLKKLKLKEHSKVIIKIIDEEELEKILDSMVIEKVEGIDYKKLKEAYYESL</sequence>
<dbReference type="EMBL" id="AE009950">
    <property type="protein sequence ID" value="AAL82182.1"/>
    <property type="molecule type" value="Genomic_DNA"/>
</dbReference>
<dbReference type="RefSeq" id="WP_011013205.1">
    <property type="nucleotide sequence ID" value="NZ_CP023154.1"/>
</dbReference>
<dbReference type="PaxDb" id="186497-PF2058"/>
<dbReference type="KEGG" id="pfu:PF2058"/>
<dbReference type="PATRIC" id="fig|186497.12.peg.2139"/>
<dbReference type="eggNOG" id="arCOG07152">
    <property type="taxonomic scope" value="Archaea"/>
</dbReference>
<dbReference type="HOGENOM" id="CLU_200885_0_1_2"/>
<dbReference type="PhylomeDB" id="Q8TZD7"/>
<dbReference type="Proteomes" id="UP000001013">
    <property type="component" value="Chromosome"/>
</dbReference>
<dbReference type="Gene3D" id="4.10.1150.10">
    <property type="entry name" value="AF2212/PG0164-like"/>
    <property type="match status" value="1"/>
</dbReference>
<dbReference type="InterPro" id="IPR008203">
    <property type="entry name" value="AF2212-like"/>
</dbReference>
<dbReference type="InterPro" id="IPR024069">
    <property type="entry name" value="AF2212-like_dom_sf"/>
</dbReference>
<dbReference type="Pfam" id="PF01954">
    <property type="entry name" value="AF2212-like"/>
    <property type="match status" value="1"/>
</dbReference>
<dbReference type="SUPFAM" id="SSF141694">
    <property type="entry name" value="AF2212/PG0164-like"/>
    <property type="match status" value="1"/>
</dbReference>
<comment type="function">
    <text evidence="1">Possibly the antitoxin component of a type II toxin-antitoxin (TA) system.</text>
</comment>
<comment type="similarity">
    <text evidence="1">Belongs to the UPF0165 family.</text>
</comment>
<protein>
    <recommendedName>
        <fullName>Putative antitoxin PF2058</fullName>
    </recommendedName>
</protein>
<proteinExistence type="inferred from homology"/>
<feature type="chain" id="PRO_0000156864" description="Putative antitoxin PF2058">
    <location>
        <begin position="1"/>
        <end position="65"/>
    </location>
</feature>
<accession>Q8TZD7</accession>
<evidence type="ECO:0000305" key="1"/>
<organism>
    <name type="scientific">Pyrococcus furiosus (strain ATCC 43587 / DSM 3638 / JCM 8422 / Vc1)</name>
    <dbReference type="NCBI Taxonomy" id="186497"/>
    <lineage>
        <taxon>Archaea</taxon>
        <taxon>Methanobacteriati</taxon>
        <taxon>Methanobacteriota</taxon>
        <taxon>Thermococci</taxon>
        <taxon>Thermococcales</taxon>
        <taxon>Thermococcaceae</taxon>
        <taxon>Pyrococcus</taxon>
    </lineage>
</organism>